<keyword id="KW-0195">Cyclin</keyword>
<keyword id="KW-0539">Nucleus</keyword>
<keyword id="KW-1185">Reference proteome</keyword>
<keyword id="KW-0804">Transcription</keyword>
<keyword id="KW-0805">Transcription regulation</keyword>
<dbReference type="EMBL" id="CR858068">
    <property type="protein sequence ID" value="CAH90307.1"/>
    <property type="molecule type" value="Transcribed_RNA"/>
</dbReference>
<dbReference type="SMR" id="Q5RD50"/>
<dbReference type="STRING" id="9601.ENSPPYP00000015917"/>
<dbReference type="Ensembl" id="ENSPPYT00000039021.1">
    <property type="protein sequence ID" value="ENSPPYP00000028787.1"/>
    <property type="gene ID" value="ENSPPYG00000014237.3"/>
</dbReference>
<dbReference type="eggNOG" id="KOG0835">
    <property type="taxonomic scope" value="Eukaryota"/>
</dbReference>
<dbReference type="GeneTree" id="ENSGT00940000159135"/>
<dbReference type="InParanoid" id="Q5RD50"/>
<dbReference type="Proteomes" id="UP000001595">
    <property type="component" value="Chromosome 3"/>
</dbReference>
<dbReference type="GO" id="GO:0000307">
    <property type="term" value="C:cyclin-dependent protein kinase holoenzyme complex"/>
    <property type="evidence" value="ECO:0007669"/>
    <property type="project" value="UniProtKB-ARBA"/>
</dbReference>
<dbReference type="GO" id="GO:0016607">
    <property type="term" value="C:nuclear speck"/>
    <property type="evidence" value="ECO:0007669"/>
    <property type="project" value="UniProtKB-SubCell"/>
</dbReference>
<dbReference type="GO" id="GO:0016538">
    <property type="term" value="F:cyclin-dependent protein serine/threonine kinase regulator activity"/>
    <property type="evidence" value="ECO:0007669"/>
    <property type="project" value="InterPro"/>
</dbReference>
<dbReference type="GO" id="GO:0006357">
    <property type="term" value="P:regulation of transcription by RNA polymerase II"/>
    <property type="evidence" value="ECO:0007669"/>
    <property type="project" value="InterPro"/>
</dbReference>
<dbReference type="FunFam" id="1.10.472.10:FF:000244">
    <property type="entry name" value="Cyclin L1a"/>
    <property type="match status" value="1"/>
</dbReference>
<dbReference type="Gene3D" id="1.10.472.10">
    <property type="entry name" value="Cyclin-like"/>
    <property type="match status" value="1"/>
</dbReference>
<dbReference type="InterPro" id="IPR013763">
    <property type="entry name" value="Cyclin-like_dom"/>
</dbReference>
<dbReference type="InterPro" id="IPR036915">
    <property type="entry name" value="Cyclin-like_sf"/>
</dbReference>
<dbReference type="InterPro" id="IPR043198">
    <property type="entry name" value="Cyclin/Ssn8"/>
</dbReference>
<dbReference type="InterPro" id="IPR006671">
    <property type="entry name" value="Cyclin_N"/>
</dbReference>
<dbReference type="PANTHER" id="PTHR10026">
    <property type="entry name" value="CYCLIN"/>
    <property type="match status" value="1"/>
</dbReference>
<dbReference type="Pfam" id="PF00134">
    <property type="entry name" value="Cyclin_N"/>
    <property type="match status" value="1"/>
</dbReference>
<dbReference type="PIRSF" id="PIRSF036580">
    <property type="entry name" value="Cyclin_L"/>
    <property type="match status" value="1"/>
</dbReference>
<dbReference type="SMART" id="SM00385">
    <property type="entry name" value="CYCLIN"/>
    <property type="match status" value="1"/>
</dbReference>
<dbReference type="SUPFAM" id="SSF47954">
    <property type="entry name" value="Cyclin-like"/>
    <property type="match status" value="1"/>
</dbReference>
<gene>
    <name type="primary">CCNL1</name>
</gene>
<comment type="function">
    <text evidence="3">Involved in pre-mRNA splicing. Functions in association with cyclin-dependent kinases (CDKs). May play a role in the regulation of RNA polymerase II (pol II). Inhibited by the CDK-specific inhibitor CDKN1A/p21.</text>
</comment>
<comment type="subunit">
    <text evidence="2 3">Interacts with POLR2A via its hyperphosphorylated C-terminal domain (CTD) (By similarity). Interacts with CDK11A, CDK11B, CDK12 and CDK13. May form a ternary complex with CDK11B and casein kinase II (CKII). Interacts with pre-mRNA-splicing factors, including at least SRSF1, SRSF2 and SRSF7/SLU7 (By similarity).</text>
</comment>
<comment type="subcellular location">
    <subcellularLocation>
        <location evidence="3">Nucleus speckle</location>
    </subcellularLocation>
    <subcellularLocation>
        <location evidence="3">Nucleus</location>
        <location evidence="3">Nucleoplasm</location>
    </subcellularLocation>
    <text evidence="3">Found in nuclear intrachromatin granules clusters (IGC), also called nuclear speckles, which are storage compartments for nuclear proteins involved in mRNA processing.</text>
</comment>
<comment type="domain">
    <text evidence="1">Contains a RS region (arginine-serine dipeptide repeat) within the C-terminal domain which is the hallmark of the SR family of splicing factors. This region probably plays a role in protein-protein interactions (By similarity).</text>
</comment>
<comment type="similarity">
    <text evidence="5">Belongs to the cyclin family. Cyclin L subfamily.</text>
</comment>
<organism>
    <name type="scientific">Pongo abelii</name>
    <name type="common">Sumatran orangutan</name>
    <name type="synonym">Pongo pygmaeus abelii</name>
    <dbReference type="NCBI Taxonomy" id="9601"/>
    <lineage>
        <taxon>Eukaryota</taxon>
        <taxon>Metazoa</taxon>
        <taxon>Chordata</taxon>
        <taxon>Craniata</taxon>
        <taxon>Vertebrata</taxon>
        <taxon>Euteleostomi</taxon>
        <taxon>Mammalia</taxon>
        <taxon>Eutheria</taxon>
        <taxon>Euarchontoglires</taxon>
        <taxon>Primates</taxon>
        <taxon>Haplorrhini</taxon>
        <taxon>Catarrhini</taxon>
        <taxon>Hominidae</taxon>
        <taxon>Pongo</taxon>
    </lineage>
</organism>
<name>CCNL1_PONAB</name>
<proteinExistence type="inferred from homology"/>
<evidence type="ECO:0000250" key="1"/>
<evidence type="ECO:0000250" key="2">
    <source>
        <dbReference type="UniProtKB" id="Q9R1Q2"/>
    </source>
</evidence>
<evidence type="ECO:0000250" key="3">
    <source>
        <dbReference type="UniProtKB" id="Q9UK58"/>
    </source>
</evidence>
<evidence type="ECO:0000256" key="4">
    <source>
        <dbReference type="SAM" id="MobiDB-lite"/>
    </source>
</evidence>
<evidence type="ECO:0000305" key="5"/>
<accession>Q5RD50</accession>
<protein>
    <recommendedName>
        <fullName>Cyclin-L1</fullName>
    </recommendedName>
</protein>
<reference key="1">
    <citation type="submission" date="2004-11" db="EMBL/GenBank/DDBJ databases">
        <authorList>
            <consortium name="The German cDNA consortium"/>
        </authorList>
    </citation>
    <scope>NUCLEOTIDE SEQUENCE [LARGE SCALE MRNA]</scope>
    <source>
        <tissue>Kidney</tissue>
    </source>
</reference>
<sequence length="172" mass="18322">MASGPHSTATAAAAASSAAPSAGGSSSGTTTTTTTTTGGILIGDRLYSEVSLTIDHSLIPEERLSPTPSMQDGLDLPSETDLRILGCELIQAAGILLRLPQVAMATGQVLFHRFFYSKSFVKHSFEIVAMACINLASKIEEAPRRIRDVINVFHHLRQLRGKSDQLHLPKPG</sequence>
<feature type="chain" id="PRO_0000080483" description="Cyclin-L1">
    <location>
        <begin position="1"/>
        <end position="172"/>
    </location>
</feature>
<feature type="region of interest" description="Disordered" evidence="4">
    <location>
        <begin position="1"/>
        <end position="36"/>
    </location>
</feature>
<feature type="region of interest" description="Cyclin-like">
    <location>
        <begin position="88"/>
        <end position="168"/>
    </location>
</feature>